<feature type="chain" id="PRO_1000116958" description="Sulfate adenylyltransferase subunit 2">
    <location>
        <begin position="1"/>
        <end position="302"/>
    </location>
</feature>
<protein>
    <recommendedName>
        <fullName evidence="1">Sulfate adenylyltransferase subunit 2</fullName>
        <ecNumber evidence="1">2.7.7.4</ecNumber>
    </recommendedName>
    <alternativeName>
        <fullName evidence="1">ATP-sulfurylase small subunit</fullName>
    </alternativeName>
    <alternativeName>
        <fullName evidence="1">Sulfate adenylate transferase</fullName>
        <shortName evidence="1">SAT</shortName>
    </alternativeName>
</protein>
<accession>B7LXG4</accession>
<sequence>MDQIRLTHLRQLEAESIHIIREVAAEFSNPVMLYSIGKDSSVMLHLARKAFYPGTLPFPLLHVDTGWKFREMYEFRDRTAKAYGCELLVHKNPEGVAMGINPFVHGSAKHTDIMKTEGLKQALNKYGFDAAFGGARRDEEKSRAKERIYSFRDRFHRWDPKNQRPELWHNYNGQINKGESIRVFPLSNWTEQDIWQYIWLENIDIVPLYLAAERPVLERDGMLMMIDDNRIDLQPGEVIKKRMVRFRTLGCWPLTGAVESNAQTLPEIIEEMLVSTTSERQGRVIDRDQAGSMELKKRQGYF</sequence>
<dbReference type="EC" id="2.7.7.4" evidence="1"/>
<dbReference type="EMBL" id="CU928160">
    <property type="protein sequence ID" value="CAQ99676.1"/>
    <property type="molecule type" value="Genomic_DNA"/>
</dbReference>
<dbReference type="RefSeq" id="WP_000372108.1">
    <property type="nucleotide sequence ID" value="NC_011741.1"/>
</dbReference>
<dbReference type="SMR" id="B7LXG4"/>
<dbReference type="GeneID" id="93779254"/>
<dbReference type="KEGG" id="ecr:ECIAI1_2854"/>
<dbReference type="HOGENOM" id="CLU_043026_0_0_6"/>
<dbReference type="UniPathway" id="UPA00140">
    <property type="reaction ID" value="UER00204"/>
</dbReference>
<dbReference type="GO" id="GO:0005524">
    <property type="term" value="F:ATP binding"/>
    <property type="evidence" value="ECO:0007669"/>
    <property type="project" value="UniProtKB-KW"/>
</dbReference>
<dbReference type="GO" id="GO:0004781">
    <property type="term" value="F:sulfate adenylyltransferase (ATP) activity"/>
    <property type="evidence" value="ECO:0007669"/>
    <property type="project" value="UniProtKB-UniRule"/>
</dbReference>
<dbReference type="GO" id="GO:0070814">
    <property type="term" value="P:hydrogen sulfide biosynthetic process"/>
    <property type="evidence" value="ECO:0007669"/>
    <property type="project" value="UniProtKB-UniRule"/>
</dbReference>
<dbReference type="GO" id="GO:0000103">
    <property type="term" value="P:sulfate assimilation"/>
    <property type="evidence" value="ECO:0007669"/>
    <property type="project" value="UniProtKB-UniRule"/>
</dbReference>
<dbReference type="CDD" id="cd23946">
    <property type="entry name" value="Sulfate_adenylyltransferase_2"/>
    <property type="match status" value="1"/>
</dbReference>
<dbReference type="FunFam" id="3.40.50.620:FF:000002">
    <property type="entry name" value="Sulfate adenylyltransferase subunit 2"/>
    <property type="match status" value="1"/>
</dbReference>
<dbReference type="Gene3D" id="3.40.50.620">
    <property type="entry name" value="HUPs"/>
    <property type="match status" value="1"/>
</dbReference>
<dbReference type="HAMAP" id="MF_00064">
    <property type="entry name" value="Sulf_adenylyltr_sub2"/>
    <property type="match status" value="1"/>
</dbReference>
<dbReference type="InterPro" id="IPR002500">
    <property type="entry name" value="PAPS_reduct_dom"/>
</dbReference>
<dbReference type="InterPro" id="IPR014729">
    <property type="entry name" value="Rossmann-like_a/b/a_fold"/>
</dbReference>
<dbReference type="InterPro" id="IPR011784">
    <property type="entry name" value="SO4_adenylTrfase_ssu"/>
</dbReference>
<dbReference type="InterPro" id="IPR050128">
    <property type="entry name" value="Sulfate_adenylyltrnsfr_sub2"/>
</dbReference>
<dbReference type="NCBIfam" id="TIGR02039">
    <property type="entry name" value="CysD"/>
    <property type="match status" value="1"/>
</dbReference>
<dbReference type="NCBIfam" id="NF003587">
    <property type="entry name" value="PRK05253.1"/>
    <property type="match status" value="1"/>
</dbReference>
<dbReference type="NCBIfam" id="NF009214">
    <property type="entry name" value="PRK12563.1"/>
    <property type="match status" value="1"/>
</dbReference>
<dbReference type="PANTHER" id="PTHR43196">
    <property type="entry name" value="SULFATE ADENYLYLTRANSFERASE SUBUNIT 2"/>
    <property type="match status" value="1"/>
</dbReference>
<dbReference type="PANTHER" id="PTHR43196:SF1">
    <property type="entry name" value="SULFATE ADENYLYLTRANSFERASE SUBUNIT 2"/>
    <property type="match status" value="1"/>
</dbReference>
<dbReference type="Pfam" id="PF01507">
    <property type="entry name" value="PAPS_reduct"/>
    <property type="match status" value="1"/>
</dbReference>
<dbReference type="PIRSF" id="PIRSF002936">
    <property type="entry name" value="CysDAde_trans"/>
    <property type="match status" value="1"/>
</dbReference>
<dbReference type="SUPFAM" id="SSF52402">
    <property type="entry name" value="Adenine nucleotide alpha hydrolases-like"/>
    <property type="match status" value="1"/>
</dbReference>
<gene>
    <name evidence="1" type="primary">cysD</name>
    <name type="ordered locus">ECIAI1_2854</name>
</gene>
<organism>
    <name type="scientific">Escherichia coli O8 (strain IAI1)</name>
    <dbReference type="NCBI Taxonomy" id="585034"/>
    <lineage>
        <taxon>Bacteria</taxon>
        <taxon>Pseudomonadati</taxon>
        <taxon>Pseudomonadota</taxon>
        <taxon>Gammaproteobacteria</taxon>
        <taxon>Enterobacterales</taxon>
        <taxon>Enterobacteriaceae</taxon>
        <taxon>Escherichia</taxon>
    </lineage>
</organism>
<reference key="1">
    <citation type="journal article" date="2009" name="PLoS Genet.">
        <title>Organised genome dynamics in the Escherichia coli species results in highly diverse adaptive paths.</title>
        <authorList>
            <person name="Touchon M."/>
            <person name="Hoede C."/>
            <person name="Tenaillon O."/>
            <person name="Barbe V."/>
            <person name="Baeriswyl S."/>
            <person name="Bidet P."/>
            <person name="Bingen E."/>
            <person name="Bonacorsi S."/>
            <person name="Bouchier C."/>
            <person name="Bouvet O."/>
            <person name="Calteau A."/>
            <person name="Chiapello H."/>
            <person name="Clermont O."/>
            <person name="Cruveiller S."/>
            <person name="Danchin A."/>
            <person name="Diard M."/>
            <person name="Dossat C."/>
            <person name="Karoui M.E."/>
            <person name="Frapy E."/>
            <person name="Garry L."/>
            <person name="Ghigo J.M."/>
            <person name="Gilles A.M."/>
            <person name="Johnson J."/>
            <person name="Le Bouguenec C."/>
            <person name="Lescat M."/>
            <person name="Mangenot S."/>
            <person name="Martinez-Jehanne V."/>
            <person name="Matic I."/>
            <person name="Nassif X."/>
            <person name="Oztas S."/>
            <person name="Petit M.A."/>
            <person name="Pichon C."/>
            <person name="Rouy Z."/>
            <person name="Ruf C.S."/>
            <person name="Schneider D."/>
            <person name="Tourret J."/>
            <person name="Vacherie B."/>
            <person name="Vallenet D."/>
            <person name="Medigue C."/>
            <person name="Rocha E.P.C."/>
            <person name="Denamur E."/>
        </authorList>
    </citation>
    <scope>NUCLEOTIDE SEQUENCE [LARGE SCALE GENOMIC DNA]</scope>
    <source>
        <strain>IAI1</strain>
    </source>
</reference>
<keyword id="KW-0067">ATP-binding</keyword>
<keyword id="KW-0547">Nucleotide-binding</keyword>
<keyword id="KW-0548">Nucleotidyltransferase</keyword>
<keyword id="KW-0808">Transferase</keyword>
<proteinExistence type="inferred from homology"/>
<comment type="function">
    <text evidence="1">With CysN forms the ATP sulfurylase (ATPS) that catalyzes the adenylation of sulfate producing adenosine 5'-phosphosulfate (APS) and diphosphate, the first enzymatic step in sulfur assimilation pathway. APS synthesis involves the formation of a high-energy phosphoric-sulfuric acid anhydride bond driven by GTP hydrolysis by CysN coupled to ATP hydrolysis by CysD.</text>
</comment>
<comment type="catalytic activity">
    <reaction evidence="1">
        <text>sulfate + ATP + H(+) = adenosine 5'-phosphosulfate + diphosphate</text>
        <dbReference type="Rhea" id="RHEA:18133"/>
        <dbReference type="ChEBI" id="CHEBI:15378"/>
        <dbReference type="ChEBI" id="CHEBI:16189"/>
        <dbReference type="ChEBI" id="CHEBI:30616"/>
        <dbReference type="ChEBI" id="CHEBI:33019"/>
        <dbReference type="ChEBI" id="CHEBI:58243"/>
        <dbReference type="EC" id="2.7.7.4"/>
    </reaction>
</comment>
<comment type="pathway">
    <text evidence="1">Sulfur metabolism; hydrogen sulfide biosynthesis; sulfite from sulfate: step 1/3.</text>
</comment>
<comment type="subunit">
    <text evidence="1">Heterodimer composed of CysD, the smaller subunit, and CysN.</text>
</comment>
<comment type="similarity">
    <text evidence="1">Belongs to the PAPS reductase family. CysD subfamily.</text>
</comment>
<evidence type="ECO:0000255" key="1">
    <source>
        <dbReference type="HAMAP-Rule" id="MF_00064"/>
    </source>
</evidence>
<name>CYSD_ECO8A</name>